<keyword id="KW-0997">Cell inner membrane</keyword>
<keyword id="KW-1003">Cell membrane</keyword>
<keyword id="KW-0472">Membrane</keyword>
<keyword id="KW-0520">NAD</keyword>
<keyword id="KW-0874">Quinone</keyword>
<keyword id="KW-1185">Reference proteome</keyword>
<keyword id="KW-1278">Translocase</keyword>
<keyword id="KW-0812">Transmembrane</keyword>
<keyword id="KW-1133">Transmembrane helix</keyword>
<keyword id="KW-0813">Transport</keyword>
<keyword id="KW-0830">Ubiquinone</keyword>
<name>NUOA_ECOK1</name>
<dbReference type="EC" id="7.1.1.-" evidence="1"/>
<dbReference type="EMBL" id="CP000468">
    <property type="protein sequence ID" value="ABJ01676.1"/>
    <property type="molecule type" value="Genomic_DNA"/>
</dbReference>
<dbReference type="RefSeq" id="WP_000062997.1">
    <property type="nucleotide sequence ID" value="NZ_CADILS010000025.1"/>
</dbReference>
<dbReference type="SMR" id="A1ADD6"/>
<dbReference type="GeneID" id="93774886"/>
<dbReference type="KEGG" id="ecv:APECO1_4277"/>
<dbReference type="HOGENOM" id="CLU_119549_2_0_6"/>
<dbReference type="Proteomes" id="UP000008216">
    <property type="component" value="Chromosome"/>
</dbReference>
<dbReference type="GO" id="GO:0030964">
    <property type="term" value="C:NADH dehydrogenase complex"/>
    <property type="evidence" value="ECO:0007669"/>
    <property type="project" value="TreeGrafter"/>
</dbReference>
<dbReference type="GO" id="GO:0005886">
    <property type="term" value="C:plasma membrane"/>
    <property type="evidence" value="ECO:0007669"/>
    <property type="project" value="UniProtKB-SubCell"/>
</dbReference>
<dbReference type="GO" id="GO:0008137">
    <property type="term" value="F:NADH dehydrogenase (ubiquinone) activity"/>
    <property type="evidence" value="ECO:0007669"/>
    <property type="project" value="InterPro"/>
</dbReference>
<dbReference type="GO" id="GO:0050136">
    <property type="term" value="F:NADH:ubiquinone reductase (non-electrogenic) activity"/>
    <property type="evidence" value="ECO:0007669"/>
    <property type="project" value="UniProtKB-UniRule"/>
</dbReference>
<dbReference type="GO" id="GO:0048038">
    <property type="term" value="F:quinone binding"/>
    <property type="evidence" value="ECO:0007669"/>
    <property type="project" value="UniProtKB-KW"/>
</dbReference>
<dbReference type="FunFam" id="1.20.58.1610:FF:000003">
    <property type="entry name" value="NADH-quinone oxidoreductase subunit A"/>
    <property type="match status" value="1"/>
</dbReference>
<dbReference type="Gene3D" id="1.20.58.1610">
    <property type="entry name" value="NADH:ubiquinone/plastoquinone oxidoreductase, chain 3"/>
    <property type="match status" value="1"/>
</dbReference>
<dbReference type="HAMAP" id="MF_01394">
    <property type="entry name" value="NDH1_NuoA"/>
    <property type="match status" value="1"/>
</dbReference>
<dbReference type="InterPro" id="IPR023043">
    <property type="entry name" value="NAD(P)H_OxRDtase_bac/plastid"/>
</dbReference>
<dbReference type="InterPro" id="IPR000440">
    <property type="entry name" value="NADH_UbQ/plastoQ_OxRdtase_su3"/>
</dbReference>
<dbReference type="InterPro" id="IPR038430">
    <property type="entry name" value="NDAH_ubi_oxred_su3_sf"/>
</dbReference>
<dbReference type="PANTHER" id="PTHR11058:SF21">
    <property type="entry name" value="NADH-QUINONE OXIDOREDUCTASE SUBUNIT A"/>
    <property type="match status" value="1"/>
</dbReference>
<dbReference type="PANTHER" id="PTHR11058">
    <property type="entry name" value="NADH-UBIQUINONE OXIDOREDUCTASE CHAIN 3"/>
    <property type="match status" value="1"/>
</dbReference>
<dbReference type="Pfam" id="PF00507">
    <property type="entry name" value="Oxidored_q4"/>
    <property type="match status" value="1"/>
</dbReference>
<organism>
    <name type="scientific">Escherichia coli O1:K1 / APEC</name>
    <dbReference type="NCBI Taxonomy" id="405955"/>
    <lineage>
        <taxon>Bacteria</taxon>
        <taxon>Pseudomonadati</taxon>
        <taxon>Pseudomonadota</taxon>
        <taxon>Gammaproteobacteria</taxon>
        <taxon>Enterobacterales</taxon>
        <taxon>Enterobacteriaceae</taxon>
        <taxon>Escherichia</taxon>
    </lineage>
</organism>
<gene>
    <name evidence="1" type="primary">nuoA</name>
    <name type="ordered locus">Ecok1_21820</name>
    <name type="ORF">APECO1_4277</name>
</gene>
<reference key="1">
    <citation type="journal article" date="2007" name="J. Bacteriol.">
        <title>The genome sequence of avian pathogenic Escherichia coli strain O1:K1:H7 shares strong similarities with human extraintestinal pathogenic E. coli genomes.</title>
        <authorList>
            <person name="Johnson T.J."/>
            <person name="Kariyawasam S."/>
            <person name="Wannemuehler Y."/>
            <person name="Mangiamele P."/>
            <person name="Johnson S.J."/>
            <person name="Doetkott C."/>
            <person name="Skyberg J.A."/>
            <person name="Lynne A.M."/>
            <person name="Johnson J.R."/>
            <person name="Nolan L.K."/>
        </authorList>
    </citation>
    <scope>NUCLEOTIDE SEQUENCE [LARGE SCALE GENOMIC DNA]</scope>
</reference>
<sequence>MSMSTSTEVIAHHWAFAIFLIVAIGLCCLMLVGGWFLGGRARARSKNVPFESGIDSVGSARLRLSAKFYLVAMFFVIFDVEALYLFAWSTSIRESGWVGFVEAAIFIFVLLAGLVYLVRIGALDWTPARSRRERMNPETNSIANRQR</sequence>
<comment type="function">
    <text evidence="1">NDH-1 shuttles electrons from NADH, via FMN and iron-sulfur (Fe-S) centers, to quinones in the respiratory chain. The immediate electron acceptor for the enzyme in this species is believed to be ubiquinone. Couples the redox reaction to proton translocation (for every two electrons transferred, four hydrogen ions are translocated across the cytoplasmic membrane), and thus conserves the redox energy in a proton gradient.</text>
</comment>
<comment type="catalytic activity">
    <reaction evidence="1">
        <text>a quinone + NADH + 5 H(+)(in) = a quinol + NAD(+) + 4 H(+)(out)</text>
        <dbReference type="Rhea" id="RHEA:57888"/>
        <dbReference type="ChEBI" id="CHEBI:15378"/>
        <dbReference type="ChEBI" id="CHEBI:24646"/>
        <dbReference type="ChEBI" id="CHEBI:57540"/>
        <dbReference type="ChEBI" id="CHEBI:57945"/>
        <dbReference type="ChEBI" id="CHEBI:132124"/>
    </reaction>
</comment>
<comment type="subunit">
    <text evidence="1">NDH-1 is composed of 13 different subunits. Subunits NuoA, H, J, K, L, M, N constitute the membrane sector of the complex.</text>
</comment>
<comment type="subcellular location">
    <subcellularLocation>
        <location evidence="1">Cell inner membrane</location>
        <topology evidence="1">Multi-pass membrane protein</topology>
    </subcellularLocation>
</comment>
<comment type="similarity">
    <text evidence="1">Belongs to the complex I subunit 3 family.</text>
</comment>
<protein>
    <recommendedName>
        <fullName evidence="1">NADH-quinone oxidoreductase subunit A</fullName>
        <ecNumber evidence="1">7.1.1.-</ecNumber>
    </recommendedName>
    <alternativeName>
        <fullName evidence="1">NADH dehydrogenase I subunit A</fullName>
    </alternativeName>
    <alternativeName>
        <fullName evidence="1">NDH-1 subunit A</fullName>
    </alternativeName>
    <alternativeName>
        <fullName evidence="1">NUO1</fullName>
    </alternativeName>
</protein>
<feature type="chain" id="PRO_0000362683" description="NADH-quinone oxidoreductase subunit A">
    <location>
        <begin position="1"/>
        <end position="147"/>
    </location>
</feature>
<feature type="transmembrane region" description="Helical" evidence="1">
    <location>
        <begin position="16"/>
        <end position="36"/>
    </location>
</feature>
<feature type="transmembrane region" description="Helical" evidence="1">
    <location>
        <begin position="68"/>
        <end position="88"/>
    </location>
</feature>
<feature type="transmembrane region" description="Helical" evidence="1">
    <location>
        <begin position="98"/>
        <end position="118"/>
    </location>
</feature>
<accession>A1ADD6</accession>
<proteinExistence type="inferred from homology"/>
<evidence type="ECO:0000255" key="1">
    <source>
        <dbReference type="HAMAP-Rule" id="MF_01394"/>
    </source>
</evidence>